<name>FIGL1_ARATH</name>
<organism>
    <name type="scientific">Arabidopsis thaliana</name>
    <name type="common">Mouse-ear cress</name>
    <dbReference type="NCBI Taxonomy" id="3702"/>
    <lineage>
        <taxon>Eukaryota</taxon>
        <taxon>Viridiplantae</taxon>
        <taxon>Streptophyta</taxon>
        <taxon>Embryophyta</taxon>
        <taxon>Tracheophyta</taxon>
        <taxon>Spermatophyta</taxon>
        <taxon>Magnoliopsida</taxon>
        <taxon>eudicotyledons</taxon>
        <taxon>Gunneridae</taxon>
        <taxon>Pentapetalae</taxon>
        <taxon>rosids</taxon>
        <taxon>malvids</taxon>
        <taxon>Brassicales</taxon>
        <taxon>Brassicaceae</taxon>
        <taxon>Camelineae</taxon>
        <taxon>Arabidopsis</taxon>
    </lineage>
</organism>
<dbReference type="EC" id="3.6.4.-" evidence="6"/>
<dbReference type="EMBL" id="AB026649">
    <property type="protein sequence ID" value="BAB01094.1"/>
    <property type="status" value="ALT_SEQ"/>
    <property type="molecule type" value="Genomic_DNA"/>
</dbReference>
<dbReference type="EMBL" id="CP002686">
    <property type="protein sequence ID" value="AEE77270.2"/>
    <property type="molecule type" value="Genomic_DNA"/>
</dbReference>
<dbReference type="EMBL" id="AY924776">
    <property type="protein sequence ID" value="AAX23851.1"/>
    <property type="molecule type" value="mRNA"/>
</dbReference>
<dbReference type="RefSeq" id="NP_001319654.1">
    <property type="nucleotide sequence ID" value="NM_001338858.1"/>
</dbReference>
<dbReference type="SMR" id="F4JEX5"/>
<dbReference type="FunCoup" id="F4JEX5">
    <property type="interactions" value="1453"/>
</dbReference>
<dbReference type="STRING" id="3702.F4JEX5"/>
<dbReference type="PaxDb" id="3702-AT3G27120.1"/>
<dbReference type="ProteomicsDB" id="228905"/>
<dbReference type="EnsemblPlants" id="AT3G27120.1">
    <property type="protein sequence ID" value="AT3G27120.1"/>
    <property type="gene ID" value="AT3G27120"/>
</dbReference>
<dbReference type="GeneID" id="822331"/>
<dbReference type="Gramene" id="AT3G27120.1">
    <property type="protein sequence ID" value="AT3G27120.1"/>
    <property type="gene ID" value="AT3G27120"/>
</dbReference>
<dbReference type="KEGG" id="ath:AT3G27120"/>
<dbReference type="Araport" id="AT3G27120"/>
<dbReference type="TAIR" id="AT3G27120">
    <property type="gene designation" value="FIGL1"/>
</dbReference>
<dbReference type="eggNOG" id="KOG0740">
    <property type="taxonomic scope" value="Eukaryota"/>
</dbReference>
<dbReference type="HOGENOM" id="CLU_000688_21_10_1"/>
<dbReference type="InParanoid" id="F4JEX5"/>
<dbReference type="OMA" id="TYDEWNK"/>
<dbReference type="PRO" id="PR:F4JEX5"/>
<dbReference type="Proteomes" id="UP000006548">
    <property type="component" value="Chromosome 3"/>
</dbReference>
<dbReference type="ExpressionAtlas" id="F4JEX5">
    <property type="expression patterns" value="baseline and differential"/>
</dbReference>
<dbReference type="GO" id="GO:0005634">
    <property type="term" value="C:nucleus"/>
    <property type="evidence" value="ECO:0000314"/>
    <property type="project" value="TAIR"/>
</dbReference>
<dbReference type="GO" id="GO:0005524">
    <property type="term" value="F:ATP binding"/>
    <property type="evidence" value="ECO:0007669"/>
    <property type="project" value="UniProtKB-KW"/>
</dbReference>
<dbReference type="GO" id="GO:0016887">
    <property type="term" value="F:ATP hydrolysis activity"/>
    <property type="evidence" value="ECO:0007669"/>
    <property type="project" value="InterPro"/>
</dbReference>
<dbReference type="GO" id="GO:0006310">
    <property type="term" value="P:DNA recombination"/>
    <property type="evidence" value="ECO:0007669"/>
    <property type="project" value="UniProtKB-KW"/>
</dbReference>
<dbReference type="GO" id="GO:0006281">
    <property type="term" value="P:DNA repair"/>
    <property type="evidence" value="ECO:0007669"/>
    <property type="project" value="UniProtKB-KW"/>
</dbReference>
<dbReference type="GO" id="GO:0045128">
    <property type="term" value="P:negative regulation of reciprocal meiotic recombination"/>
    <property type="evidence" value="ECO:0000315"/>
    <property type="project" value="TAIR"/>
</dbReference>
<dbReference type="FunFam" id="1.10.8.60:FF:000022">
    <property type="entry name" value="Fidgetin like 1"/>
    <property type="match status" value="1"/>
</dbReference>
<dbReference type="FunFam" id="3.40.50.300:FF:000093">
    <property type="entry name" value="Fidgetin-like 1"/>
    <property type="match status" value="1"/>
</dbReference>
<dbReference type="Gene3D" id="1.10.8.60">
    <property type="match status" value="1"/>
</dbReference>
<dbReference type="Gene3D" id="3.40.50.300">
    <property type="entry name" value="P-loop containing nucleotide triphosphate hydrolases"/>
    <property type="match status" value="1"/>
</dbReference>
<dbReference type="InterPro" id="IPR003593">
    <property type="entry name" value="AAA+_ATPase"/>
</dbReference>
<dbReference type="InterPro" id="IPR041569">
    <property type="entry name" value="AAA_lid_3"/>
</dbReference>
<dbReference type="InterPro" id="IPR003959">
    <property type="entry name" value="ATPase_AAA_core"/>
</dbReference>
<dbReference type="InterPro" id="IPR003960">
    <property type="entry name" value="ATPase_AAA_CS"/>
</dbReference>
<dbReference type="InterPro" id="IPR056224">
    <property type="entry name" value="FIGL1_N"/>
</dbReference>
<dbReference type="InterPro" id="IPR050304">
    <property type="entry name" value="MT-severing_AAA_ATPase"/>
</dbReference>
<dbReference type="InterPro" id="IPR027417">
    <property type="entry name" value="P-loop_NTPase"/>
</dbReference>
<dbReference type="InterPro" id="IPR015415">
    <property type="entry name" value="Spast_Vps4_C"/>
</dbReference>
<dbReference type="PANTHER" id="PTHR23074">
    <property type="entry name" value="AAA DOMAIN-CONTAINING"/>
    <property type="match status" value="1"/>
</dbReference>
<dbReference type="PANTHER" id="PTHR23074:SF17">
    <property type="entry name" value="FIDGETIN-LIKE PROTEIN 1"/>
    <property type="match status" value="1"/>
</dbReference>
<dbReference type="Pfam" id="PF00004">
    <property type="entry name" value="AAA"/>
    <property type="match status" value="1"/>
</dbReference>
<dbReference type="Pfam" id="PF17862">
    <property type="entry name" value="AAA_lid_3"/>
    <property type="match status" value="1"/>
</dbReference>
<dbReference type="Pfam" id="PF24347">
    <property type="entry name" value="FIGL1_N"/>
    <property type="match status" value="1"/>
</dbReference>
<dbReference type="Pfam" id="PF09336">
    <property type="entry name" value="Vps4_C"/>
    <property type="match status" value="1"/>
</dbReference>
<dbReference type="SMART" id="SM00382">
    <property type="entry name" value="AAA"/>
    <property type="match status" value="1"/>
</dbReference>
<dbReference type="SUPFAM" id="SSF52540">
    <property type="entry name" value="P-loop containing nucleoside triphosphate hydrolases"/>
    <property type="match status" value="1"/>
</dbReference>
<dbReference type="PROSITE" id="PS00674">
    <property type="entry name" value="AAA"/>
    <property type="match status" value="1"/>
</dbReference>
<evidence type="ECO:0000250" key="1"/>
<evidence type="ECO:0000250" key="2">
    <source>
        <dbReference type="UniProtKB" id="Q6PIW4"/>
    </source>
</evidence>
<evidence type="ECO:0000256" key="3">
    <source>
        <dbReference type="SAM" id="MobiDB-lite"/>
    </source>
</evidence>
<evidence type="ECO:0000269" key="4">
    <source>
    </source>
</evidence>
<evidence type="ECO:0000303" key="5">
    <source>
    </source>
</evidence>
<evidence type="ECO:0000305" key="6"/>
<evidence type="ECO:0000312" key="7">
    <source>
        <dbReference type="Araport" id="AT3G27120"/>
    </source>
</evidence>
<evidence type="ECO:0000312" key="8">
    <source>
        <dbReference type="EMBL" id="BAB01094.1"/>
    </source>
</evidence>
<feature type="chain" id="PRO_0000440041" description="ATPase family AAA domain-containing protein FIGL1">
    <location>
        <begin position="1"/>
        <end position="680"/>
    </location>
</feature>
<feature type="region of interest" description="Disordered" evidence="3">
    <location>
        <begin position="214"/>
        <end position="234"/>
    </location>
</feature>
<feature type="region of interest" description="Disordered" evidence="3">
    <location>
        <begin position="250"/>
        <end position="275"/>
    </location>
</feature>
<feature type="region of interest" description="Disordered" evidence="3">
    <location>
        <begin position="288"/>
        <end position="352"/>
    </location>
</feature>
<feature type="compositionally biased region" description="Polar residues" evidence="3">
    <location>
        <begin position="295"/>
        <end position="308"/>
    </location>
</feature>
<feature type="compositionally biased region" description="Gly residues" evidence="3">
    <location>
        <begin position="313"/>
        <end position="323"/>
    </location>
</feature>
<feature type="compositionally biased region" description="Polar residues" evidence="3">
    <location>
        <begin position="336"/>
        <end position="346"/>
    </location>
</feature>
<feature type="binding site" evidence="2">
    <location>
        <position position="406"/>
    </location>
    <ligand>
        <name>ATP</name>
        <dbReference type="ChEBI" id="CHEBI:30616"/>
    </ligand>
</feature>
<feature type="binding site" evidence="2">
    <location>
        <begin position="446"/>
        <end position="451"/>
    </location>
    <ligand>
        <name>ATP</name>
        <dbReference type="ChEBI" id="CHEBI:30616"/>
    </ligand>
</feature>
<comment type="function">
    <text evidence="4">Involved in DNA double-strand break (DBS) repair via homologous recombination (HR). Limits class II meiotic crossover (CO) formation by regulating the invasion step of meiotic HR. May counteract DMC1 and RAD51-mediated inter-homolog strand invasion to limit CO formation. Functions independently of FANCM.</text>
</comment>
<comment type="catalytic activity">
    <reaction evidence="6">
        <text>ATP + H2O = ADP + phosphate + H(+)</text>
        <dbReference type="Rhea" id="RHEA:13065"/>
        <dbReference type="ChEBI" id="CHEBI:15377"/>
        <dbReference type="ChEBI" id="CHEBI:15378"/>
        <dbReference type="ChEBI" id="CHEBI:30616"/>
        <dbReference type="ChEBI" id="CHEBI:43474"/>
        <dbReference type="ChEBI" id="CHEBI:456216"/>
    </reaction>
</comment>
<comment type="cofactor">
    <cofactor evidence="1">
        <name>Mg(2+)</name>
        <dbReference type="ChEBI" id="CHEBI:18420"/>
    </cofactor>
</comment>
<comment type="subcellular location">
    <subcellularLocation>
        <location evidence="4">Nucleus</location>
    </subcellularLocation>
</comment>
<comment type="similarity">
    <text evidence="6">Belongs to the AAA ATPase family.</text>
</comment>
<comment type="sequence caution" evidence="6">
    <conflict type="erroneous gene model prediction">
        <sequence resource="EMBL-CDS" id="BAB01094"/>
    </conflict>
</comment>
<gene>
    <name evidence="5" type="primary">FIGL1</name>
    <name evidence="7" type="ordered locus">At3g27120</name>
    <name evidence="8" type="ORF">MOJ10.20</name>
</gene>
<proteinExistence type="evidence at transcript level"/>
<keyword id="KW-0067">ATP-binding</keyword>
<keyword id="KW-0227">DNA damage</keyword>
<keyword id="KW-0233">DNA recombination</keyword>
<keyword id="KW-0234">DNA repair</keyword>
<keyword id="KW-0378">Hydrolase</keyword>
<keyword id="KW-0547">Nucleotide-binding</keyword>
<keyword id="KW-0539">Nucleus</keyword>
<keyword id="KW-1185">Reference proteome</keyword>
<accession>F4JEX5</accession>
<accession>Q5BPQ2</accession>
<accession>Q9LSC3</accession>
<protein>
    <recommendedName>
        <fullName evidence="6">ATPase family AAA domain-containing protein FIGL1</fullName>
    </recommendedName>
    <alternativeName>
        <fullName evidence="5">AAA-ATPase FIDGETIN-LIKE 1</fullName>
        <ecNumber evidence="6">3.6.4.-</ecNumber>
    </alternativeName>
</protein>
<reference key="1">
    <citation type="journal article" date="2000" name="DNA Res.">
        <title>Structural analysis of Arabidopsis thaliana chromosome 3. I. Sequence features of the regions of 4,504,864 bp covered by sixty P1 and TAC clones.</title>
        <authorList>
            <person name="Sato S."/>
            <person name="Nakamura Y."/>
            <person name="Kaneko T."/>
            <person name="Katoh T."/>
            <person name="Asamizu E."/>
            <person name="Tabata S."/>
        </authorList>
    </citation>
    <scope>NUCLEOTIDE SEQUENCE [LARGE SCALE GENOMIC DNA]</scope>
    <source>
        <strain>cv. Columbia</strain>
    </source>
</reference>
<reference key="2">
    <citation type="journal article" date="2017" name="Plant J.">
        <title>Araport11: a complete reannotation of the Arabidopsis thaliana reference genome.</title>
        <authorList>
            <person name="Cheng C.Y."/>
            <person name="Krishnakumar V."/>
            <person name="Chan A.P."/>
            <person name="Thibaud-Nissen F."/>
            <person name="Schobel S."/>
            <person name="Town C.D."/>
        </authorList>
    </citation>
    <scope>GENOME REANNOTATION</scope>
    <source>
        <strain>cv. Columbia</strain>
    </source>
</reference>
<reference key="3">
    <citation type="submission" date="2005-02" db="EMBL/GenBank/DDBJ databases">
        <authorList>
            <person name="Underwood B.A."/>
            <person name="Xiao Y.-L."/>
            <person name="Moskal W.A. Jr."/>
            <person name="Monaghan E.L."/>
            <person name="Wang W."/>
            <person name="Redman J.C."/>
            <person name="Wu H.C."/>
            <person name="Utterback T."/>
            <person name="Town C.D."/>
        </authorList>
    </citation>
    <scope>NUCLEOTIDE SEQUENCE [LARGE SCALE MRNA] OF 188-680</scope>
    <source>
        <strain>cv. Columbia</strain>
    </source>
</reference>
<reference key="4">
    <citation type="journal article" date="2015" name="PLoS Genet.">
        <title>AAA-ATPase FIDGETIN-LIKE 1 and helicase FANCM antagonize meiotic crossovers by distinct mechanisms.</title>
        <authorList>
            <person name="Girard C."/>
            <person name="Chelysheva L."/>
            <person name="Choinard S."/>
            <person name="Froger N."/>
            <person name="Macaisne N."/>
            <person name="Lemhemdi A."/>
            <person name="Lehmemdi A."/>
            <person name="Mazel J."/>
            <person name="Crismani W."/>
            <person name="Mercier R."/>
        </authorList>
    </citation>
    <scope>FUNCTION</scope>
    <scope>SUBCELLULAR LOCATION</scope>
</reference>
<sequence>MCGSVVSDSEREFEFHFWGFGHLGKEEERIMAGKRSSPFSSPLLRPPPEFLNVKEEGETETPCWRKEVDENLKRLQSLLFGADKFLEKSDFSSAQILGLRLLGFLDSRSVTDADRDFIGPIRREVASKIDLALEGLVSDSDRKAFELANTAPGAIFGSKGGFDVEKIKQSKYFGFHVSQSNGKGVKEMEERHDTDKLIPKAPKSMMQAKLTSLYGNSIGKPDNQRKTSVNNQDRASDECVIVERSHGFGFGTKRPHAETSSLANDGEVKEDGAPNGFVSAKIKLEMDVRQKRGSTESPSSCLSPQSDKNALGRGYGSRSGGLRRGYRSNFVPPVKTNGNNVGNLTSRIGGKTDDALDDSTRTCLEMLCGPDGELPEKLRNLEPRLIEHVSNEIMDRDPNVRWDDIAGLEHAKKCVTEMVIWPLLRPDIFKGCRSPGKGLLLFGPPGTGKTMIGKAIAGEAKATFFYISASSLTSKWIGEGEKLVRALFGVASCRQPAVIFVDEIDSLLSQRKSDGEHESSRRLKTQFLIEMEGFDSGSEQILLIGATNRPQELDEAARRRLTKRLYIPLPSSEARAWIIQNLLKKDGLFTLSDDDMNIICNLTEGYSGSDMKNLVKDATMGPLREALKRGIDITNLTKDDMRLVTLQDFKDALQEVRPSVSQNELGIYENWNNQFGSLSL</sequence>